<comment type="function">
    <text evidence="1">This protein binds to 23S rRNA in the presence of protein L20.</text>
</comment>
<comment type="subunit">
    <text evidence="1">Part of the 50S ribosomal subunit. Contacts protein L20.</text>
</comment>
<comment type="similarity">
    <text evidence="1">Belongs to the bacterial ribosomal protein bL21 family.</text>
</comment>
<accession>B6EL41</accession>
<sequence length="103" mass="11443">MYAVFQSGGKQHRVSEGQTLRLEKLDVETGATVDFDNVLMIANGEEITVGAPLVAGGKVTAEVVQHGRGDKVKIVKFRRRKHSRKQQGHRQWFTEVRITGISA</sequence>
<feature type="chain" id="PRO_1000143748" description="Large ribosomal subunit protein bL21">
    <location>
        <begin position="1"/>
        <end position="103"/>
    </location>
</feature>
<name>RL21_ALISL</name>
<reference key="1">
    <citation type="journal article" date="2008" name="BMC Genomics">
        <title>The genome sequence of the fish pathogen Aliivibrio salmonicida strain LFI1238 shows extensive evidence of gene decay.</title>
        <authorList>
            <person name="Hjerde E."/>
            <person name="Lorentzen M.S."/>
            <person name="Holden M.T."/>
            <person name="Seeger K."/>
            <person name="Paulsen S."/>
            <person name="Bason N."/>
            <person name="Churcher C."/>
            <person name="Harris D."/>
            <person name="Norbertczak H."/>
            <person name="Quail M.A."/>
            <person name="Sanders S."/>
            <person name="Thurston S."/>
            <person name="Parkhill J."/>
            <person name="Willassen N.P."/>
            <person name="Thomson N.R."/>
        </authorList>
    </citation>
    <scope>NUCLEOTIDE SEQUENCE [LARGE SCALE GENOMIC DNA]</scope>
    <source>
        <strain>LFI1238</strain>
    </source>
</reference>
<gene>
    <name evidence="1" type="primary">rplU</name>
    <name type="ordered locus">VSAL_I0361</name>
</gene>
<proteinExistence type="inferred from homology"/>
<keyword id="KW-0687">Ribonucleoprotein</keyword>
<keyword id="KW-0689">Ribosomal protein</keyword>
<keyword id="KW-0694">RNA-binding</keyword>
<keyword id="KW-0699">rRNA-binding</keyword>
<evidence type="ECO:0000255" key="1">
    <source>
        <dbReference type="HAMAP-Rule" id="MF_01363"/>
    </source>
</evidence>
<evidence type="ECO:0000305" key="2"/>
<organism>
    <name type="scientific">Aliivibrio salmonicida (strain LFI1238)</name>
    <name type="common">Vibrio salmonicida (strain LFI1238)</name>
    <dbReference type="NCBI Taxonomy" id="316275"/>
    <lineage>
        <taxon>Bacteria</taxon>
        <taxon>Pseudomonadati</taxon>
        <taxon>Pseudomonadota</taxon>
        <taxon>Gammaproteobacteria</taxon>
        <taxon>Vibrionales</taxon>
        <taxon>Vibrionaceae</taxon>
        <taxon>Aliivibrio</taxon>
    </lineage>
</organism>
<protein>
    <recommendedName>
        <fullName evidence="1">Large ribosomal subunit protein bL21</fullName>
    </recommendedName>
    <alternativeName>
        <fullName evidence="2">50S ribosomal protein L21</fullName>
    </alternativeName>
</protein>
<dbReference type="EMBL" id="FM178379">
    <property type="protein sequence ID" value="CAQ78046.1"/>
    <property type="molecule type" value="Genomic_DNA"/>
</dbReference>
<dbReference type="RefSeq" id="WP_012549188.1">
    <property type="nucleotide sequence ID" value="NC_011312.1"/>
</dbReference>
<dbReference type="SMR" id="B6EL41"/>
<dbReference type="KEGG" id="vsa:VSAL_I0361"/>
<dbReference type="eggNOG" id="COG0261">
    <property type="taxonomic scope" value="Bacteria"/>
</dbReference>
<dbReference type="HOGENOM" id="CLU_061463_3_3_6"/>
<dbReference type="Proteomes" id="UP000001730">
    <property type="component" value="Chromosome 1"/>
</dbReference>
<dbReference type="GO" id="GO:0005737">
    <property type="term" value="C:cytoplasm"/>
    <property type="evidence" value="ECO:0007669"/>
    <property type="project" value="UniProtKB-ARBA"/>
</dbReference>
<dbReference type="GO" id="GO:1990904">
    <property type="term" value="C:ribonucleoprotein complex"/>
    <property type="evidence" value="ECO:0007669"/>
    <property type="project" value="UniProtKB-KW"/>
</dbReference>
<dbReference type="GO" id="GO:0005840">
    <property type="term" value="C:ribosome"/>
    <property type="evidence" value="ECO:0007669"/>
    <property type="project" value="UniProtKB-KW"/>
</dbReference>
<dbReference type="GO" id="GO:0019843">
    <property type="term" value="F:rRNA binding"/>
    <property type="evidence" value="ECO:0007669"/>
    <property type="project" value="UniProtKB-UniRule"/>
</dbReference>
<dbReference type="GO" id="GO:0003735">
    <property type="term" value="F:structural constituent of ribosome"/>
    <property type="evidence" value="ECO:0007669"/>
    <property type="project" value="InterPro"/>
</dbReference>
<dbReference type="GO" id="GO:0006412">
    <property type="term" value="P:translation"/>
    <property type="evidence" value="ECO:0007669"/>
    <property type="project" value="UniProtKB-UniRule"/>
</dbReference>
<dbReference type="HAMAP" id="MF_01363">
    <property type="entry name" value="Ribosomal_bL21"/>
    <property type="match status" value="1"/>
</dbReference>
<dbReference type="InterPro" id="IPR028909">
    <property type="entry name" value="bL21-like"/>
</dbReference>
<dbReference type="InterPro" id="IPR036164">
    <property type="entry name" value="bL21-like_sf"/>
</dbReference>
<dbReference type="InterPro" id="IPR001787">
    <property type="entry name" value="Ribosomal_bL21"/>
</dbReference>
<dbReference type="InterPro" id="IPR018258">
    <property type="entry name" value="Ribosomal_bL21_CS"/>
</dbReference>
<dbReference type="NCBIfam" id="TIGR00061">
    <property type="entry name" value="L21"/>
    <property type="match status" value="1"/>
</dbReference>
<dbReference type="PANTHER" id="PTHR21349">
    <property type="entry name" value="50S RIBOSOMAL PROTEIN L21"/>
    <property type="match status" value="1"/>
</dbReference>
<dbReference type="PANTHER" id="PTHR21349:SF0">
    <property type="entry name" value="LARGE RIBOSOMAL SUBUNIT PROTEIN BL21M"/>
    <property type="match status" value="1"/>
</dbReference>
<dbReference type="Pfam" id="PF00829">
    <property type="entry name" value="Ribosomal_L21p"/>
    <property type="match status" value="1"/>
</dbReference>
<dbReference type="SUPFAM" id="SSF141091">
    <property type="entry name" value="L21p-like"/>
    <property type="match status" value="1"/>
</dbReference>
<dbReference type="PROSITE" id="PS01169">
    <property type="entry name" value="RIBOSOMAL_L21"/>
    <property type="match status" value="1"/>
</dbReference>